<organism>
    <name type="scientific">Pseudomonas putida (strain GB-1)</name>
    <dbReference type="NCBI Taxonomy" id="76869"/>
    <lineage>
        <taxon>Bacteria</taxon>
        <taxon>Pseudomonadati</taxon>
        <taxon>Pseudomonadota</taxon>
        <taxon>Gammaproteobacteria</taxon>
        <taxon>Pseudomonadales</taxon>
        <taxon>Pseudomonadaceae</taxon>
        <taxon>Pseudomonas</taxon>
    </lineage>
</organism>
<feature type="chain" id="PRO_1000084241" description="Probable D-serine dehydratase">
    <location>
        <begin position="1"/>
        <end position="445"/>
    </location>
</feature>
<feature type="modified residue" description="N6-(pyridoxal phosphate)lysine" evidence="1">
    <location>
        <position position="119"/>
    </location>
</feature>
<comment type="catalytic activity">
    <reaction evidence="1">
        <text>D-serine = pyruvate + NH4(+)</text>
        <dbReference type="Rhea" id="RHEA:13977"/>
        <dbReference type="ChEBI" id="CHEBI:15361"/>
        <dbReference type="ChEBI" id="CHEBI:28938"/>
        <dbReference type="ChEBI" id="CHEBI:35247"/>
        <dbReference type="EC" id="4.3.1.18"/>
    </reaction>
</comment>
<comment type="cofactor">
    <cofactor evidence="1">
        <name>pyridoxal 5'-phosphate</name>
        <dbReference type="ChEBI" id="CHEBI:597326"/>
    </cofactor>
</comment>
<comment type="similarity">
    <text evidence="1">Belongs to the serine/threonine dehydratase family. DsdA subfamily.</text>
</comment>
<proteinExistence type="inferred from homology"/>
<name>SDHD_PSEPG</name>
<evidence type="ECO:0000255" key="1">
    <source>
        <dbReference type="HAMAP-Rule" id="MF_01030"/>
    </source>
</evidence>
<keyword id="KW-0456">Lyase</keyword>
<keyword id="KW-0663">Pyridoxal phosphate</keyword>
<gene>
    <name evidence="1" type="primary">dsdA</name>
    <name type="ordered locus">PputGB1_3112</name>
</gene>
<sequence length="445" mass="47568">MIHGKTLEAWQQSHPIIADLVALKETSWFNPGIAQASEALRDVGLTAADVQAASARLQRFAPYLATVFPETAPAGGIIESHIAPLPLLRQRLIEEGALRNAGSLWLKADSDLPVSGSIKARGGIHEVLKHAEDLALAAGLITPTDDYTRLASEQARAFFGQYKIAVGSTGNLGLSIGIMSAKLGFQVSVHMSSDARQWKKDKLRANGVTVVEHASDYSVAVEQGRQQAAADPSCYFVDDENSPQLFLGYAVAAERLALQFDQAGIQVDADHPLFVYLPCGVGGGPGGVAFGLKLVFGDAVHCIFAEPTHSPCMLLGVYTGLHDETSVQDFGIDNITAADGLAVGRPSGFVGKAMQRLIDGYYTVTDEALYRLMVIAHEQDKVKLEPSALAGVPGMLRVLQADEYLARQGFTPTQLQQATHLVWGTGGSMVPEDEFNAYLAKGRSV</sequence>
<protein>
    <recommendedName>
        <fullName evidence="1">Probable D-serine dehydratase</fullName>
        <ecNumber evidence="1">4.3.1.18</ecNumber>
    </recommendedName>
    <alternativeName>
        <fullName evidence="1">D-serine deaminase</fullName>
        <shortName evidence="1">DSD</shortName>
    </alternativeName>
</protein>
<accession>B0KGK3</accession>
<dbReference type="EC" id="4.3.1.18" evidence="1"/>
<dbReference type="EMBL" id="CP000926">
    <property type="protein sequence ID" value="ABY99004.1"/>
    <property type="molecule type" value="Genomic_DNA"/>
</dbReference>
<dbReference type="RefSeq" id="WP_012272734.1">
    <property type="nucleotide sequence ID" value="NC_010322.1"/>
</dbReference>
<dbReference type="SMR" id="B0KGK3"/>
<dbReference type="KEGG" id="ppg:PputGB1_3112"/>
<dbReference type="eggNOG" id="COG3048">
    <property type="taxonomic scope" value="Bacteria"/>
</dbReference>
<dbReference type="HOGENOM" id="CLU_035707_0_0_6"/>
<dbReference type="Proteomes" id="UP000002157">
    <property type="component" value="Chromosome"/>
</dbReference>
<dbReference type="GO" id="GO:0008721">
    <property type="term" value="F:D-serine ammonia-lyase activity"/>
    <property type="evidence" value="ECO:0007669"/>
    <property type="project" value="UniProtKB-EC"/>
</dbReference>
<dbReference type="GO" id="GO:0016836">
    <property type="term" value="F:hydro-lyase activity"/>
    <property type="evidence" value="ECO:0007669"/>
    <property type="project" value="UniProtKB-UniRule"/>
</dbReference>
<dbReference type="GO" id="GO:0030170">
    <property type="term" value="F:pyridoxal phosphate binding"/>
    <property type="evidence" value="ECO:0007669"/>
    <property type="project" value="InterPro"/>
</dbReference>
<dbReference type="GO" id="GO:0036088">
    <property type="term" value="P:D-serine catabolic process"/>
    <property type="evidence" value="ECO:0007669"/>
    <property type="project" value="TreeGrafter"/>
</dbReference>
<dbReference type="GO" id="GO:0009097">
    <property type="term" value="P:isoleucine biosynthetic process"/>
    <property type="evidence" value="ECO:0007669"/>
    <property type="project" value="TreeGrafter"/>
</dbReference>
<dbReference type="Gene3D" id="3.40.50.1100">
    <property type="match status" value="2"/>
</dbReference>
<dbReference type="HAMAP" id="MF_01030">
    <property type="entry name" value="D_Ser_dehydrat"/>
    <property type="match status" value="1"/>
</dbReference>
<dbReference type="InterPro" id="IPR011780">
    <property type="entry name" value="D_Ser_am_lyase"/>
</dbReference>
<dbReference type="InterPro" id="IPR050147">
    <property type="entry name" value="Ser/Thr_Dehydratase"/>
</dbReference>
<dbReference type="InterPro" id="IPR000634">
    <property type="entry name" value="Ser/Thr_deHydtase_PyrdxlP-BS"/>
</dbReference>
<dbReference type="InterPro" id="IPR001926">
    <property type="entry name" value="TrpB-like_PALP"/>
</dbReference>
<dbReference type="InterPro" id="IPR036052">
    <property type="entry name" value="TrpB-like_PALP_sf"/>
</dbReference>
<dbReference type="NCBIfam" id="TIGR02035">
    <property type="entry name" value="D_Ser_am_lyase"/>
    <property type="match status" value="1"/>
</dbReference>
<dbReference type="NCBIfam" id="NF002823">
    <property type="entry name" value="PRK02991.1"/>
    <property type="match status" value="1"/>
</dbReference>
<dbReference type="PANTHER" id="PTHR48078:SF9">
    <property type="entry name" value="D-SERINE DEHYDRATASE"/>
    <property type="match status" value="1"/>
</dbReference>
<dbReference type="PANTHER" id="PTHR48078">
    <property type="entry name" value="THREONINE DEHYDRATASE, MITOCHONDRIAL-RELATED"/>
    <property type="match status" value="1"/>
</dbReference>
<dbReference type="Pfam" id="PF00291">
    <property type="entry name" value="PALP"/>
    <property type="match status" value="1"/>
</dbReference>
<dbReference type="SUPFAM" id="SSF53686">
    <property type="entry name" value="Tryptophan synthase beta subunit-like PLP-dependent enzymes"/>
    <property type="match status" value="1"/>
</dbReference>
<dbReference type="PROSITE" id="PS00165">
    <property type="entry name" value="DEHYDRATASE_SER_THR"/>
    <property type="match status" value="1"/>
</dbReference>
<reference key="1">
    <citation type="submission" date="2008-01" db="EMBL/GenBank/DDBJ databases">
        <title>Complete sequence of Pseudomonas putida GB-1.</title>
        <authorList>
            <consortium name="US DOE Joint Genome Institute"/>
            <person name="Copeland A."/>
            <person name="Lucas S."/>
            <person name="Lapidus A."/>
            <person name="Barry K."/>
            <person name="Glavina del Rio T."/>
            <person name="Dalin E."/>
            <person name="Tice H."/>
            <person name="Pitluck S."/>
            <person name="Bruce D."/>
            <person name="Goodwin L."/>
            <person name="Chertkov O."/>
            <person name="Brettin T."/>
            <person name="Detter J.C."/>
            <person name="Han C."/>
            <person name="Kuske C.R."/>
            <person name="Schmutz J."/>
            <person name="Larimer F."/>
            <person name="Land M."/>
            <person name="Hauser L."/>
            <person name="Kyrpides N."/>
            <person name="Kim E."/>
            <person name="McCarthy J.K."/>
            <person name="Richardson P."/>
        </authorList>
    </citation>
    <scope>NUCLEOTIDE SEQUENCE [LARGE SCALE GENOMIC DNA]</scope>
    <source>
        <strain>GB-1</strain>
    </source>
</reference>